<comment type="function">
    <text evidence="3 4">E3 ubiquitin-protein ligase involved in the positive regulation of the gametogenesis progression. Mediates the proteasomal degradation of KRP6, a cyclin-dependent kinase inhibitor which accumulates during meiosis and blocks the progression of subsequent mitoses during gametophyte development. Functions in association with RHF2A (PubMed:18552199). Possesses E3 ubiquitin-protein ligase activity when associated with the E2 enzyme UBC8 in vitro (PubMed:15644464).</text>
</comment>
<comment type="catalytic activity">
    <reaction>
        <text>S-ubiquitinyl-[E2 ubiquitin-conjugating enzyme]-L-cysteine + [acceptor protein]-L-lysine = [E2 ubiquitin-conjugating enzyme]-L-cysteine + N(6)-ubiquitinyl-[acceptor protein]-L-lysine.</text>
        <dbReference type="EC" id="2.3.2.27"/>
    </reaction>
</comment>
<comment type="pathway">
    <text>Protein modification; protein ubiquitination.</text>
</comment>
<comment type="subunit">
    <text evidence="4">Interacts with KRP6.</text>
</comment>
<comment type="tissue specificity">
    <text evidence="5">Expressed in stems, flowers, green siliques, cauline leaves, seeds and roots.</text>
</comment>
<comment type="developmental stage">
    <text evidence="4">Expressed in emerging floral primordia and then in stamens and carpels. Expressed first in stamen primordia, then in pollen mother cells and tapetal cells and later in microspores until flower stage 11. Expressed in carpels throughout flower development from primordia to the mature embryo sac stage. Expressed in developing embryo.</text>
</comment>
<comment type="sequence caution" evidence="7">
    <conflict type="erroneous gene model prediction">
        <sequence resource="EMBL-CDS" id="CAB46003"/>
    </conflict>
</comment>
<comment type="sequence caution" evidence="7">
    <conflict type="erroneous gene model prediction">
        <sequence resource="EMBL-CDS" id="CAB78464"/>
    </conflict>
</comment>
<organism>
    <name type="scientific">Arabidopsis thaliana</name>
    <name type="common">Mouse-ear cress</name>
    <dbReference type="NCBI Taxonomy" id="3702"/>
    <lineage>
        <taxon>Eukaryota</taxon>
        <taxon>Viridiplantae</taxon>
        <taxon>Streptophyta</taxon>
        <taxon>Embryophyta</taxon>
        <taxon>Tracheophyta</taxon>
        <taxon>Spermatophyta</taxon>
        <taxon>Magnoliopsida</taxon>
        <taxon>eudicotyledons</taxon>
        <taxon>Gunneridae</taxon>
        <taxon>Pentapetalae</taxon>
        <taxon>rosids</taxon>
        <taxon>malvids</taxon>
        <taxon>Brassicales</taxon>
        <taxon>Brassicaceae</taxon>
        <taxon>Camelineae</taxon>
        <taxon>Arabidopsis</taxon>
    </lineage>
</organism>
<gene>
    <name evidence="6" type="primary">RHF1A</name>
    <name type="ordered locus">At4g14220</name>
    <name type="ORF">dl3150w</name>
    <name type="ORF">FCAALL.146</name>
</gene>
<name>RHF1A_ARATH</name>
<evidence type="ECO:0000255" key="1">
    <source>
        <dbReference type="PROSITE-ProRule" id="PRU00175"/>
    </source>
</evidence>
<evidence type="ECO:0000256" key="2">
    <source>
        <dbReference type="SAM" id="MobiDB-lite"/>
    </source>
</evidence>
<evidence type="ECO:0000269" key="3">
    <source>
    </source>
</evidence>
<evidence type="ECO:0000269" key="4">
    <source>
    </source>
</evidence>
<evidence type="ECO:0000269" key="5">
    <source>
    </source>
</evidence>
<evidence type="ECO:0000303" key="6">
    <source>
    </source>
</evidence>
<evidence type="ECO:0000305" key="7"/>
<proteinExistence type="evidence at protein level"/>
<dbReference type="EC" id="2.3.2.27"/>
<dbReference type="EMBL" id="DQ059122">
    <property type="protein sequence ID" value="AAY57608.1"/>
    <property type="molecule type" value="mRNA"/>
</dbReference>
<dbReference type="EMBL" id="Z97335">
    <property type="protein sequence ID" value="CAB46003.1"/>
    <property type="status" value="ALT_SEQ"/>
    <property type="molecule type" value="Genomic_DNA"/>
</dbReference>
<dbReference type="EMBL" id="AL161538">
    <property type="protein sequence ID" value="CAB78464.1"/>
    <property type="status" value="ALT_SEQ"/>
    <property type="molecule type" value="Genomic_DNA"/>
</dbReference>
<dbReference type="EMBL" id="CP002687">
    <property type="protein sequence ID" value="AEE83395.1"/>
    <property type="molecule type" value="Genomic_DNA"/>
</dbReference>
<dbReference type="EMBL" id="AK117968">
    <property type="protein sequence ID" value="BAC42605.1"/>
    <property type="molecule type" value="mRNA"/>
</dbReference>
<dbReference type="EMBL" id="AF079181">
    <property type="protein sequence ID" value="AAC69855.1"/>
    <property type="molecule type" value="mRNA"/>
</dbReference>
<dbReference type="PIR" id="C85155">
    <property type="entry name" value="C85155"/>
</dbReference>
<dbReference type="PIR" id="T51853">
    <property type="entry name" value="T51853"/>
</dbReference>
<dbReference type="RefSeq" id="NP_193158.2">
    <property type="nucleotide sequence ID" value="NM_117499.5"/>
</dbReference>
<dbReference type="BioGRID" id="12359">
    <property type="interactions" value="1"/>
</dbReference>
<dbReference type="FunCoup" id="Q4TU14">
    <property type="interactions" value="134"/>
</dbReference>
<dbReference type="STRING" id="3702.Q4TU14"/>
<dbReference type="iPTMnet" id="Q4TU14"/>
<dbReference type="PaxDb" id="3702-AT4G14220.1"/>
<dbReference type="ProteomicsDB" id="236860"/>
<dbReference type="EnsemblPlants" id="AT4G14220.1">
    <property type="protein sequence ID" value="AT4G14220.1"/>
    <property type="gene ID" value="AT4G14220"/>
</dbReference>
<dbReference type="GeneID" id="827062"/>
<dbReference type="Gramene" id="AT4G14220.1">
    <property type="protein sequence ID" value="AT4G14220.1"/>
    <property type="gene ID" value="AT4G14220"/>
</dbReference>
<dbReference type="KEGG" id="ath:AT4G14220"/>
<dbReference type="Araport" id="AT4G14220"/>
<dbReference type="TAIR" id="AT4G14220">
    <property type="gene designation" value="RHF1A"/>
</dbReference>
<dbReference type="eggNOG" id="KOG0800">
    <property type="taxonomic scope" value="Eukaryota"/>
</dbReference>
<dbReference type="HOGENOM" id="CLU_053463_0_0_1"/>
<dbReference type="InParanoid" id="Q4TU14"/>
<dbReference type="OMA" id="CLEPFNC"/>
<dbReference type="PhylomeDB" id="Q4TU14"/>
<dbReference type="UniPathway" id="UPA00143"/>
<dbReference type="PRO" id="PR:Q4TU14"/>
<dbReference type="Proteomes" id="UP000006548">
    <property type="component" value="Chromosome 4"/>
</dbReference>
<dbReference type="ExpressionAtlas" id="Q4TU14">
    <property type="expression patterns" value="baseline and differential"/>
</dbReference>
<dbReference type="GO" id="GO:0004842">
    <property type="term" value="F:ubiquitin-protein transferase activity"/>
    <property type="evidence" value="ECO:0000314"/>
    <property type="project" value="TAIR"/>
</dbReference>
<dbReference type="GO" id="GO:0008270">
    <property type="term" value="F:zinc ion binding"/>
    <property type="evidence" value="ECO:0007669"/>
    <property type="project" value="UniProtKB-KW"/>
</dbReference>
<dbReference type="GO" id="GO:0009561">
    <property type="term" value="P:megagametogenesis"/>
    <property type="evidence" value="ECO:0000316"/>
    <property type="project" value="TAIR"/>
</dbReference>
<dbReference type="GO" id="GO:0055046">
    <property type="term" value="P:microgametogenesis"/>
    <property type="evidence" value="ECO:0000316"/>
    <property type="project" value="TAIR"/>
</dbReference>
<dbReference type="GO" id="GO:0010498">
    <property type="term" value="P:proteasomal protein catabolic process"/>
    <property type="evidence" value="ECO:0000314"/>
    <property type="project" value="TAIR"/>
</dbReference>
<dbReference type="GO" id="GO:0016567">
    <property type="term" value="P:protein ubiquitination"/>
    <property type="evidence" value="ECO:0000314"/>
    <property type="project" value="UniProtKB"/>
</dbReference>
<dbReference type="GO" id="GO:0051726">
    <property type="term" value="P:regulation of cell cycle"/>
    <property type="evidence" value="ECO:0000316"/>
    <property type="project" value="TAIR"/>
</dbReference>
<dbReference type="Gene3D" id="3.30.40.10">
    <property type="entry name" value="Zinc/RING finger domain, C3HC4 (zinc finger)"/>
    <property type="match status" value="1"/>
</dbReference>
<dbReference type="InterPro" id="IPR001841">
    <property type="entry name" value="Znf_RING"/>
</dbReference>
<dbReference type="InterPro" id="IPR013083">
    <property type="entry name" value="Znf_RING/FYVE/PHD"/>
</dbReference>
<dbReference type="PANTHER" id="PTHR46463:SF16">
    <property type="entry name" value="E3 UBIQUITIN-PROTEIN LIGASE RHF1A"/>
    <property type="match status" value="1"/>
</dbReference>
<dbReference type="PANTHER" id="PTHR46463">
    <property type="entry name" value="ZINC FINGER, RING/FYVE/PHD-TYPE"/>
    <property type="match status" value="1"/>
</dbReference>
<dbReference type="Pfam" id="PF13639">
    <property type="entry name" value="zf-RING_2"/>
    <property type="match status" value="1"/>
</dbReference>
<dbReference type="SMART" id="SM00184">
    <property type="entry name" value="RING"/>
    <property type="match status" value="1"/>
</dbReference>
<dbReference type="SUPFAM" id="SSF57850">
    <property type="entry name" value="RING/U-box"/>
    <property type="match status" value="1"/>
</dbReference>
<dbReference type="PROSITE" id="PS50089">
    <property type="entry name" value="ZF_RING_2"/>
    <property type="match status" value="1"/>
</dbReference>
<sequence length="371" mass="40284">MSNFTYTSAFNLSDNSPFNPAIGSSSSSSSALVVASDDDNNTDDACSICLEPFTLQDPSTVTSCKHEYHLQCIIEWSQRSKECPICWQLFVLRDPASQELLAAVEKERLLKTRNISSSSPISIHHSHDDFHSEEEESQFSSFDEQFLRHLTEAAHRRCLLRRRDGQISSSLVSSSDPTTIHPTDLVNLYRLSAISHVEHQNSNPCPSPGSMTPSPVSGHSSIPADSNNGSRISPGPSPSRSSQSPKSPEASSLPEAIKSKLAAASAKYKESISKSKQGLKEKLLARNNSVKELSKGVQREMNAGIAGVARMIERMDFSSKRFGGSAHVSTSTATASGFNFSFKGKRVEANSKSNNNGDKTEPQKLQGGETC</sequence>
<feature type="chain" id="PRO_0000395845" description="E3 ubiquitin-protein ligase RHF1A">
    <location>
        <begin position="1"/>
        <end position="371"/>
    </location>
</feature>
<feature type="zinc finger region" description="RING-type; atypical" evidence="1">
    <location>
        <begin position="46"/>
        <end position="87"/>
    </location>
</feature>
<feature type="region of interest" description="Disordered" evidence="2">
    <location>
        <begin position="199"/>
        <end position="254"/>
    </location>
</feature>
<feature type="region of interest" description="Disordered" evidence="2">
    <location>
        <begin position="348"/>
        <end position="371"/>
    </location>
</feature>
<feature type="compositionally biased region" description="Polar residues" evidence="2">
    <location>
        <begin position="200"/>
        <end position="225"/>
    </location>
</feature>
<feature type="compositionally biased region" description="Low complexity" evidence="2">
    <location>
        <begin position="226"/>
        <end position="252"/>
    </location>
</feature>
<feature type="sequence conflict" description="In Ref. 5; BAC42605." evidence="7" ref="5">
    <original>K</original>
    <variation>R</variation>
    <location>
        <position position="81"/>
    </location>
</feature>
<accession>Q4TU14</accession>
<accession>O23280</accession>
<accession>Q8GXY4</accession>
<accession>Q9ZT43</accession>
<keyword id="KW-0479">Metal-binding</keyword>
<keyword id="KW-1185">Reference proteome</keyword>
<keyword id="KW-0808">Transferase</keyword>
<keyword id="KW-0833">Ubl conjugation pathway</keyword>
<keyword id="KW-0862">Zinc</keyword>
<keyword id="KW-0863">Zinc-finger</keyword>
<protein>
    <recommendedName>
        <fullName evidence="7">E3 ubiquitin-protein ligase RHF1A</fullName>
        <ecNumber>2.3.2.27</ecNumber>
    </recommendedName>
    <alternativeName>
        <fullName evidence="6">RING-H2 finger F1a</fullName>
    </alternativeName>
    <alternativeName>
        <fullName evidence="7">RING-H2 zinc finger protein RHF1a</fullName>
    </alternativeName>
    <alternativeName>
        <fullName evidence="7">RING-type E3 ubiquitin transferase RHF1A</fullName>
    </alternativeName>
</protein>
<reference key="1">
    <citation type="journal article" date="2005" name="Plant Physiol.">
        <title>Functional analysis of the RING-type ubiquitin ligase family of Arabidopsis.</title>
        <authorList>
            <person name="Stone S.L."/>
            <person name="Hauksdottir H."/>
            <person name="Troy A."/>
            <person name="Herschleb J."/>
            <person name="Kraft E."/>
            <person name="Callis J."/>
        </authorList>
    </citation>
    <scope>NUCLEOTIDE SEQUENCE [MRNA]</scope>
    <scope>FUNCTION</scope>
    <source>
        <strain>cv. Columbia</strain>
        <tissue>Leaf</tissue>
    </source>
</reference>
<reference key="2">
    <citation type="journal article" date="1998" name="Nature">
        <title>Analysis of 1.9 Mb of contiguous sequence from chromosome 4 of Arabidopsis thaliana.</title>
        <authorList>
            <person name="Bevan M."/>
            <person name="Bancroft I."/>
            <person name="Bent E."/>
            <person name="Love K."/>
            <person name="Goodman H.M."/>
            <person name="Dean C."/>
            <person name="Bergkamp R."/>
            <person name="Dirkse W."/>
            <person name="van Staveren M."/>
            <person name="Stiekema W."/>
            <person name="Drost L."/>
            <person name="Ridley P."/>
            <person name="Hudson S.-A."/>
            <person name="Patel K."/>
            <person name="Murphy G."/>
            <person name="Piffanelli P."/>
            <person name="Wedler H."/>
            <person name="Wedler E."/>
            <person name="Wambutt R."/>
            <person name="Weitzenegger T."/>
            <person name="Pohl T."/>
            <person name="Terryn N."/>
            <person name="Gielen J."/>
            <person name="Villarroel R."/>
            <person name="De Clercq R."/>
            <person name="van Montagu M."/>
            <person name="Lecharny A."/>
            <person name="Aubourg S."/>
            <person name="Gy I."/>
            <person name="Kreis M."/>
            <person name="Lao N."/>
            <person name="Kavanagh T."/>
            <person name="Hempel S."/>
            <person name="Kotter P."/>
            <person name="Entian K.-D."/>
            <person name="Rieger M."/>
            <person name="Schaefer M."/>
            <person name="Funk B."/>
            <person name="Mueller-Auer S."/>
            <person name="Silvey M."/>
            <person name="James R."/>
            <person name="Monfort A."/>
            <person name="Pons A."/>
            <person name="Puigdomenech P."/>
            <person name="Douka A."/>
            <person name="Voukelatou E."/>
            <person name="Milioni D."/>
            <person name="Hatzopoulos P."/>
            <person name="Piravandi E."/>
            <person name="Obermaier B."/>
            <person name="Hilbert H."/>
            <person name="Duesterhoeft A."/>
            <person name="Moores T."/>
            <person name="Jones J.D.G."/>
            <person name="Eneva T."/>
            <person name="Palme K."/>
            <person name="Benes V."/>
            <person name="Rechmann S."/>
            <person name="Ansorge W."/>
            <person name="Cooke R."/>
            <person name="Berger C."/>
            <person name="Delseny M."/>
            <person name="Voet M."/>
            <person name="Volckaert G."/>
            <person name="Mewes H.-W."/>
            <person name="Klosterman S."/>
            <person name="Schueller C."/>
            <person name="Chalwatzis N."/>
        </authorList>
    </citation>
    <scope>NUCLEOTIDE SEQUENCE [LARGE SCALE GENOMIC DNA]</scope>
    <source>
        <strain>cv. Columbia</strain>
    </source>
</reference>
<reference key="3">
    <citation type="journal article" date="1999" name="Nature">
        <title>Sequence and analysis of chromosome 4 of the plant Arabidopsis thaliana.</title>
        <authorList>
            <person name="Mayer K.F.X."/>
            <person name="Schueller C."/>
            <person name="Wambutt R."/>
            <person name="Murphy G."/>
            <person name="Volckaert G."/>
            <person name="Pohl T."/>
            <person name="Duesterhoeft A."/>
            <person name="Stiekema W."/>
            <person name="Entian K.-D."/>
            <person name="Terryn N."/>
            <person name="Harris B."/>
            <person name="Ansorge W."/>
            <person name="Brandt P."/>
            <person name="Grivell L.A."/>
            <person name="Rieger M."/>
            <person name="Weichselgartner M."/>
            <person name="de Simone V."/>
            <person name="Obermaier B."/>
            <person name="Mache R."/>
            <person name="Mueller M."/>
            <person name="Kreis M."/>
            <person name="Delseny M."/>
            <person name="Puigdomenech P."/>
            <person name="Watson M."/>
            <person name="Schmidtheini T."/>
            <person name="Reichert B."/>
            <person name="Portetelle D."/>
            <person name="Perez-Alonso M."/>
            <person name="Boutry M."/>
            <person name="Bancroft I."/>
            <person name="Vos P."/>
            <person name="Hoheisel J."/>
            <person name="Zimmermann W."/>
            <person name="Wedler H."/>
            <person name="Ridley P."/>
            <person name="Langham S.-A."/>
            <person name="McCullagh B."/>
            <person name="Bilham L."/>
            <person name="Robben J."/>
            <person name="van der Schueren J."/>
            <person name="Grymonprez B."/>
            <person name="Chuang Y.-J."/>
            <person name="Vandenbussche F."/>
            <person name="Braeken M."/>
            <person name="Weltjens I."/>
            <person name="Voet M."/>
            <person name="Bastiaens I."/>
            <person name="Aert R."/>
            <person name="Defoor E."/>
            <person name="Weitzenegger T."/>
            <person name="Bothe G."/>
            <person name="Ramsperger U."/>
            <person name="Hilbert H."/>
            <person name="Braun M."/>
            <person name="Holzer E."/>
            <person name="Brandt A."/>
            <person name="Peters S."/>
            <person name="van Staveren M."/>
            <person name="Dirkse W."/>
            <person name="Mooijman P."/>
            <person name="Klein Lankhorst R."/>
            <person name="Rose M."/>
            <person name="Hauf J."/>
            <person name="Koetter P."/>
            <person name="Berneiser S."/>
            <person name="Hempel S."/>
            <person name="Feldpausch M."/>
            <person name="Lamberth S."/>
            <person name="Van den Daele H."/>
            <person name="De Keyser A."/>
            <person name="Buysshaert C."/>
            <person name="Gielen J."/>
            <person name="Villarroel R."/>
            <person name="De Clercq R."/>
            <person name="van Montagu M."/>
            <person name="Rogers J."/>
            <person name="Cronin A."/>
            <person name="Quail M.A."/>
            <person name="Bray-Allen S."/>
            <person name="Clark L."/>
            <person name="Doggett J."/>
            <person name="Hall S."/>
            <person name="Kay M."/>
            <person name="Lennard N."/>
            <person name="McLay K."/>
            <person name="Mayes R."/>
            <person name="Pettett A."/>
            <person name="Rajandream M.A."/>
            <person name="Lyne M."/>
            <person name="Benes V."/>
            <person name="Rechmann S."/>
            <person name="Borkova D."/>
            <person name="Bloecker H."/>
            <person name="Scharfe M."/>
            <person name="Grimm M."/>
            <person name="Loehnert T.-H."/>
            <person name="Dose S."/>
            <person name="de Haan M."/>
            <person name="Maarse A.C."/>
            <person name="Schaefer M."/>
            <person name="Mueller-Auer S."/>
            <person name="Gabel C."/>
            <person name="Fuchs M."/>
            <person name="Fartmann B."/>
            <person name="Granderath K."/>
            <person name="Dauner D."/>
            <person name="Herzl A."/>
            <person name="Neumann S."/>
            <person name="Argiriou A."/>
            <person name="Vitale D."/>
            <person name="Liguori R."/>
            <person name="Piravandi E."/>
            <person name="Massenet O."/>
            <person name="Quigley F."/>
            <person name="Clabauld G."/>
            <person name="Muendlein A."/>
            <person name="Felber R."/>
            <person name="Schnabl S."/>
            <person name="Hiller R."/>
            <person name="Schmidt W."/>
            <person name="Lecharny A."/>
            <person name="Aubourg S."/>
            <person name="Chefdor F."/>
            <person name="Cooke R."/>
            <person name="Berger C."/>
            <person name="Monfort A."/>
            <person name="Casacuberta E."/>
            <person name="Gibbons T."/>
            <person name="Weber N."/>
            <person name="Vandenbol M."/>
            <person name="Bargues M."/>
            <person name="Terol J."/>
            <person name="Torres A."/>
            <person name="Perez-Perez A."/>
            <person name="Purnelle B."/>
            <person name="Bent E."/>
            <person name="Johnson S."/>
            <person name="Tacon D."/>
            <person name="Jesse T."/>
            <person name="Heijnen L."/>
            <person name="Schwarz S."/>
            <person name="Scholler P."/>
            <person name="Heber S."/>
            <person name="Francs P."/>
            <person name="Bielke C."/>
            <person name="Frishman D."/>
            <person name="Haase D."/>
            <person name="Lemcke K."/>
            <person name="Mewes H.-W."/>
            <person name="Stocker S."/>
            <person name="Zaccaria P."/>
            <person name="Bevan M."/>
            <person name="Wilson R.K."/>
            <person name="de la Bastide M."/>
            <person name="Habermann K."/>
            <person name="Parnell L."/>
            <person name="Dedhia N."/>
            <person name="Gnoj L."/>
            <person name="Schutz K."/>
            <person name="Huang E."/>
            <person name="Spiegel L."/>
            <person name="Sekhon M."/>
            <person name="Murray J."/>
            <person name="Sheet P."/>
            <person name="Cordes M."/>
            <person name="Abu-Threideh J."/>
            <person name="Stoneking T."/>
            <person name="Kalicki J."/>
            <person name="Graves T."/>
            <person name="Harmon G."/>
            <person name="Edwards J."/>
            <person name="Latreille P."/>
            <person name="Courtney L."/>
            <person name="Cloud J."/>
            <person name="Abbott A."/>
            <person name="Scott K."/>
            <person name="Johnson D."/>
            <person name="Minx P."/>
            <person name="Bentley D."/>
            <person name="Fulton B."/>
            <person name="Miller N."/>
            <person name="Greco T."/>
            <person name="Kemp K."/>
            <person name="Kramer J."/>
            <person name="Fulton L."/>
            <person name="Mardis E."/>
            <person name="Dante M."/>
            <person name="Pepin K."/>
            <person name="Hillier L.W."/>
            <person name="Nelson J."/>
            <person name="Spieth J."/>
            <person name="Ryan E."/>
            <person name="Andrews S."/>
            <person name="Geisel C."/>
            <person name="Layman D."/>
            <person name="Du H."/>
            <person name="Ali J."/>
            <person name="Berghoff A."/>
            <person name="Jones K."/>
            <person name="Drone K."/>
            <person name="Cotton M."/>
            <person name="Joshu C."/>
            <person name="Antonoiu B."/>
            <person name="Zidanic M."/>
            <person name="Strong C."/>
            <person name="Sun H."/>
            <person name="Lamar B."/>
            <person name="Yordan C."/>
            <person name="Ma P."/>
            <person name="Zhong J."/>
            <person name="Preston R."/>
            <person name="Vil D."/>
            <person name="Shekher M."/>
            <person name="Matero A."/>
            <person name="Shah R."/>
            <person name="Swaby I.K."/>
            <person name="O'Shaughnessy A."/>
            <person name="Rodriguez M."/>
            <person name="Hoffman J."/>
            <person name="Till S."/>
            <person name="Granat S."/>
            <person name="Shohdy N."/>
            <person name="Hasegawa A."/>
            <person name="Hameed A."/>
            <person name="Lodhi M."/>
            <person name="Johnson A."/>
            <person name="Chen E."/>
            <person name="Marra M.A."/>
            <person name="Martienssen R."/>
            <person name="McCombie W.R."/>
        </authorList>
    </citation>
    <scope>NUCLEOTIDE SEQUENCE [LARGE SCALE GENOMIC DNA]</scope>
    <source>
        <strain>cv. Columbia</strain>
    </source>
</reference>
<reference key="4">
    <citation type="journal article" date="2017" name="Plant J.">
        <title>Araport11: a complete reannotation of the Arabidopsis thaliana reference genome.</title>
        <authorList>
            <person name="Cheng C.Y."/>
            <person name="Krishnakumar V."/>
            <person name="Chan A.P."/>
            <person name="Thibaud-Nissen F."/>
            <person name="Schobel S."/>
            <person name="Town C.D."/>
        </authorList>
    </citation>
    <scope>GENOME REANNOTATION</scope>
    <source>
        <strain>cv. Columbia</strain>
    </source>
</reference>
<reference key="5">
    <citation type="journal article" date="2002" name="Science">
        <title>Functional annotation of a full-length Arabidopsis cDNA collection.</title>
        <authorList>
            <person name="Seki M."/>
            <person name="Narusaka M."/>
            <person name="Kamiya A."/>
            <person name="Ishida J."/>
            <person name="Satou M."/>
            <person name="Sakurai T."/>
            <person name="Nakajima M."/>
            <person name="Enju A."/>
            <person name="Akiyama K."/>
            <person name="Oono Y."/>
            <person name="Muramatsu M."/>
            <person name="Hayashizaki Y."/>
            <person name="Kawai J."/>
            <person name="Carninci P."/>
            <person name="Itoh M."/>
            <person name="Ishii Y."/>
            <person name="Arakawa T."/>
            <person name="Shibata K."/>
            <person name="Shinagawa A."/>
            <person name="Shinozaki K."/>
        </authorList>
    </citation>
    <scope>NUCLEOTIDE SEQUENCE [LARGE SCALE MRNA]</scope>
    <source>
        <strain>cv. Columbia</strain>
    </source>
</reference>
<reference key="6">
    <citation type="journal article" date="1998" name="FEBS Lett.">
        <title>Widespread occurrence of a highly conserved RING-H2 zinc finger motif in the model plant Arabidopsis thaliana.</title>
        <authorList>
            <person name="Jensen R.B."/>
            <person name="Jensen K.L."/>
            <person name="Jespersen H.M."/>
            <person name="Skriver K."/>
        </authorList>
    </citation>
    <scope>NUCLEOTIDE SEQUENCE [MRNA] OF 43-371</scope>
    <scope>TISSUE SPECIFICITY</scope>
    <source>
        <strain>cv. Columbia</strain>
    </source>
</reference>
<reference key="7">
    <citation type="journal article" date="2008" name="Plant Cell">
        <title>Targeted degradation of the cyclin-dependent kinase inhibitor ICK4/KRP6 by RING-type E3 ligases is essential for mitotic cell cycle progression during Arabidopsis gametogenesis.</title>
        <authorList>
            <person name="Liu J."/>
            <person name="Zhang Y."/>
            <person name="Qin G."/>
            <person name="Tsuge T."/>
            <person name="Sakaguchi N."/>
            <person name="Luo G."/>
            <person name="Sun K."/>
            <person name="Shi D."/>
            <person name="Aki S."/>
            <person name="Zheng N."/>
            <person name="Aoyama T."/>
            <person name="Oka A."/>
            <person name="Yang W."/>
            <person name="Umeda M."/>
            <person name="Xie Q."/>
            <person name="Gu H."/>
            <person name="Qu L.J."/>
        </authorList>
    </citation>
    <scope>FUNCTION</scope>
    <scope>INTERACTION WITH KRP6</scope>
    <scope>DEVELOPMENTAL STAGE</scope>
</reference>